<dbReference type="EMBL" id="BA000033">
    <property type="protein sequence ID" value="BAB94102.1"/>
    <property type="molecule type" value="Genomic_DNA"/>
</dbReference>
<dbReference type="RefSeq" id="WP_000645456.1">
    <property type="nucleotide sequence ID" value="NC_003923.1"/>
</dbReference>
<dbReference type="SMR" id="Q8NYH3"/>
<dbReference type="KEGG" id="sam:MW0237"/>
<dbReference type="HOGENOM" id="CLU_000445_14_1_9"/>
<dbReference type="GO" id="GO:0005737">
    <property type="term" value="C:cytoplasm"/>
    <property type="evidence" value="ECO:0007669"/>
    <property type="project" value="UniProtKB-SubCell"/>
</dbReference>
<dbReference type="GO" id="GO:0003677">
    <property type="term" value="F:DNA binding"/>
    <property type="evidence" value="ECO:0007669"/>
    <property type="project" value="UniProtKB-KW"/>
</dbReference>
<dbReference type="GO" id="GO:0000156">
    <property type="term" value="F:phosphorelay response regulator activity"/>
    <property type="evidence" value="ECO:0007669"/>
    <property type="project" value="InterPro"/>
</dbReference>
<dbReference type="CDD" id="cd17532">
    <property type="entry name" value="REC_LytTR_AlgR-like"/>
    <property type="match status" value="1"/>
</dbReference>
<dbReference type="FunFam" id="3.40.50.2300:FF:000134">
    <property type="entry name" value="Autolysin response regulator LytR"/>
    <property type="match status" value="1"/>
</dbReference>
<dbReference type="Gene3D" id="3.40.50.2300">
    <property type="match status" value="1"/>
</dbReference>
<dbReference type="Gene3D" id="2.40.50.1020">
    <property type="entry name" value="LytTr DNA-binding domain"/>
    <property type="match status" value="1"/>
</dbReference>
<dbReference type="InterPro" id="IPR011006">
    <property type="entry name" value="CheY-like_superfamily"/>
</dbReference>
<dbReference type="InterPro" id="IPR046947">
    <property type="entry name" value="LytR-like"/>
</dbReference>
<dbReference type="InterPro" id="IPR007492">
    <property type="entry name" value="LytTR_DNA-bd_dom"/>
</dbReference>
<dbReference type="InterPro" id="IPR001789">
    <property type="entry name" value="Sig_transdc_resp-reg_receiver"/>
</dbReference>
<dbReference type="NCBIfam" id="NF010684">
    <property type="entry name" value="PRK14084.1"/>
    <property type="match status" value="1"/>
</dbReference>
<dbReference type="PANTHER" id="PTHR37299:SF1">
    <property type="entry name" value="STAGE 0 SPORULATION PROTEIN A HOMOLOG"/>
    <property type="match status" value="1"/>
</dbReference>
<dbReference type="PANTHER" id="PTHR37299">
    <property type="entry name" value="TRANSCRIPTIONAL REGULATOR-RELATED"/>
    <property type="match status" value="1"/>
</dbReference>
<dbReference type="Pfam" id="PF04397">
    <property type="entry name" value="LytTR"/>
    <property type="match status" value="1"/>
</dbReference>
<dbReference type="Pfam" id="PF00072">
    <property type="entry name" value="Response_reg"/>
    <property type="match status" value="1"/>
</dbReference>
<dbReference type="SMART" id="SM00850">
    <property type="entry name" value="LytTR"/>
    <property type="match status" value="1"/>
</dbReference>
<dbReference type="SMART" id="SM00448">
    <property type="entry name" value="REC"/>
    <property type="match status" value="1"/>
</dbReference>
<dbReference type="SUPFAM" id="SSF52172">
    <property type="entry name" value="CheY-like"/>
    <property type="match status" value="1"/>
</dbReference>
<dbReference type="PROSITE" id="PS50930">
    <property type="entry name" value="HTH_LYTTR"/>
    <property type="match status" value="1"/>
</dbReference>
<dbReference type="PROSITE" id="PS50110">
    <property type="entry name" value="RESPONSE_REGULATORY"/>
    <property type="match status" value="1"/>
</dbReference>
<accession>Q8NYH3</accession>
<comment type="function">
    <text evidence="3">Member of the two-component regulatory system LytR/LytS that regulates genes involved in autolysis, programmed cell death, biofilm formation and cell wall metabolism. Also participates in sensing and responding to host defense cationic antimicrobial peptides (HDPs). Upon phosphorylation by LytS, functions as a transcription regulator by direct binding to promoter regions of target genes including lrgA and lrgB, to positively regulate their expression.</text>
</comment>
<comment type="subunit">
    <text evidence="2">Homodimer; when phosphorylated.</text>
</comment>
<comment type="subcellular location">
    <subcellularLocation>
        <location evidence="1">Cytoplasm</location>
    </subcellularLocation>
</comment>
<comment type="PTM">
    <text evidence="2">Phosphorylated and dephosphorylated by LytS.</text>
</comment>
<evidence type="ECO:0000250" key="1"/>
<evidence type="ECO:0000250" key="2">
    <source>
        <dbReference type="UniProtKB" id="P60609"/>
    </source>
</evidence>
<evidence type="ECO:0000250" key="3">
    <source>
        <dbReference type="UniProtKB" id="P60611"/>
    </source>
</evidence>
<evidence type="ECO:0000255" key="4">
    <source>
        <dbReference type="PROSITE-ProRule" id="PRU00112"/>
    </source>
</evidence>
<evidence type="ECO:0000255" key="5">
    <source>
        <dbReference type="PROSITE-ProRule" id="PRU00169"/>
    </source>
</evidence>
<gene>
    <name type="primary">lytR</name>
    <name type="ordered locus">MW0237</name>
</gene>
<sequence>MKALIIDDEPLARNELTYLLNEIGGFEEINEAENVKETLEALLINQYDIIFLDVNLMDENGIELGAKIQKMKEPPAIIFATAHDQYAVQAFELNATDYILKPFGQKRIEQAVNKVRATKAKDDNSASAIANDMSANFDQSLPVEIDDKIHMLKQQNIIGIGTHNGITTIHTTNHKYETTEPLNRYEKRLNPAYFIRIHRSYIINTKHIKEVQQWFNYTYMVILTNGVKMQVGRSFMKDFKASIGLL</sequence>
<keyword id="KW-0963">Cytoplasm</keyword>
<keyword id="KW-0238">DNA-binding</keyword>
<keyword id="KW-0597">Phosphoprotein</keyword>
<keyword id="KW-0804">Transcription</keyword>
<keyword id="KW-0805">Transcription regulation</keyword>
<keyword id="KW-0902">Two-component regulatory system</keyword>
<reference key="1">
    <citation type="journal article" date="2002" name="Lancet">
        <title>Genome and virulence determinants of high virulence community-acquired MRSA.</title>
        <authorList>
            <person name="Baba T."/>
            <person name="Takeuchi F."/>
            <person name="Kuroda M."/>
            <person name="Yuzawa H."/>
            <person name="Aoki K."/>
            <person name="Oguchi A."/>
            <person name="Nagai Y."/>
            <person name="Iwama N."/>
            <person name="Asano K."/>
            <person name="Naimi T."/>
            <person name="Kuroda H."/>
            <person name="Cui L."/>
            <person name="Yamamoto K."/>
            <person name="Hiramatsu K."/>
        </authorList>
    </citation>
    <scope>NUCLEOTIDE SEQUENCE [LARGE SCALE GENOMIC DNA]</scope>
    <source>
        <strain>MW2</strain>
    </source>
</reference>
<protein>
    <recommendedName>
        <fullName>Transcriptional regulatory protein LytR</fullName>
    </recommendedName>
    <alternativeName>
        <fullName>Sensory transduction protein LytR</fullName>
    </alternativeName>
</protein>
<organism>
    <name type="scientific">Staphylococcus aureus (strain MW2)</name>
    <dbReference type="NCBI Taxonomy" id="196620"/>
    <lineage>
        <taxon>Bacteria</taxon>
        <taxon>Bacillati</taxon>
        <taxon>Bacillota</taxon>
        <taxon>Bacilli</taxon>
        <taxon>Bacillales</taxon>
        <taxon>Staphylococcaceae</taxon>
        <taxon>Staphylococcus</taxon>
    </lineage>
</organism>
<proteinExistence type="inferred from homology"/>
<name>LYTR_STAAW</name>
<feature type="chain" id="PRO_0000081132" description="Transcriptional regulatory protein LytR">
    <location>
        <begin position="1"/>
        <end position="246"/>
    </location>
</feature>
<feature type="domain" description="Response regulatory" evidence="5">
    <location>
        <begin position="2"/>
        <end position="116"/>
    </location>
</feature>
<feature type="domain" description="HTH LytTR-type" evidence="4">
    <location>
        <begin position="141"/>
        <end position="245"/>
    </location>
</feature>
<feature type="modified residue" description="4-aspartylphosphate" evidence="5">
    <location>
        <position position="53"/>
    </location>
</feature>